<evidence type="ECO:0000255" key="1">
    <source>
        <dbReference type="HAMAP-Rule" id="MF_00144"/>
    </source>
</evidence>
<feature type="chain" id="PRO_0000349669" description="tRNA-specific 2-thiouridylase MnmA">
    <location>
        <begin position="1"/>
        <end position="383"/>
    </location>
</feature>
<feature type="region of interest" description="Interaction with tRNA" evidence="1">
    <location>
        <begin position="148"/>
        <end position="150"/>
    </location>
</feature>
<feature type="active site" description="Nucleophile" evidence="1">
    <location>
        <position position="101"/>
    </location>
</feature>
<feature type="active site" description="Cysteine persulfide intermediate" evidence="1">
    <location>
        <position position="199"/>
    </location>
</feature>
<feature type="binding site" evidence="1">
    <location>
        <begin position="6"/>
        <end position="13"/>
    </location>
    <ligand>
        <name>ATP</name>
        <dbReference type="ChEBI" id="CHEBI:30616"/>
    </ligand>
</feature>
<feature type="binding site" evidence="1">
    <location>
        <position position="32"/>
    </location>
    <ligand>
        <name>ATP</name>
        <dbReference type="ChEBI" id="CHEBI:30616"/>
    </ligand>
</feature>
<feature type="binding site" evidence="1">
    <location>
        <position position="125"/>
    </location>
    <ligand>
        <name>ATP</name>
        <dbReference type="ChEBI" id="CHEBI:30616"/>
    </ligand>
</feature>
<feature type="site" description="Interaction with tRNA" evidence="1">
    <location>
        <position position="126"/>
    </location>
</feature>
<feature type="site" description="Interaction with tRNA" evidence="1">
    <location>
        <position position="355"/>
    </location>
</feature>
<feature type="disulfide bond" description="Alternate" evidence="1">
    <location>
        <begin position="101"/>
        <end position="199"/>
    </location>
</feature>
<dbReference type="EC" id="2.8.1.13" evidence="1"/>
<dbReference type="EMBL" id="AP009152">
    <property type="protein sequence ID" value="BAG29224.1"/>
    <property type="molecule type" value="Genomic_DNA"/>
</dbReference>
<dbReference type="RefSeq" id="WP_012397945.1">
    <property type="nucleotide sequence ID" value="NC_010617.1"/>
</dbReference>
<dbReference type="SMR" id="B2GL48"/>
<dbReference type="STRING" id="378753.KRH_08770"/>
<dbReference type="KEGG" id="krh:KRH_08770"/>
<dbReference type="eggNOG" id="COG0482">
    <property type="taxonomic scope" value="Bacteria"/>
</dbReference>
<dbReference type="HOGENOM" id="CLU_035188_0_2_11"/>
<dbReference type="OrthoDB" id="9800696at2"/>
<dbReference type="Proteomes" id="UP000008838">
    <property type="component" value="Chromosome"/>
</dbReference>
<dbReference type="GO" id="GO:0005737">
    <property type="term" value="C:cytoplasm"/>
    <property type="evidence" value="ECO:0007669"/>
    <property type="project" value="UniProtKB-SubCell"/>
</dbReference>
<dbReference type="GO" id="GO:0005524">
    <property type="term" value="F:ATP binding"/>
    <property type="evidence" value="ECO:0007669"/>
    <property type="project" value="UniProtKB-KW"/>
</dbReference>
<dbReference type="GO" id="GO:0000049">
    <property type="term" value="F:tRNA binding"/>
    <property type="evidence" value="ECO:0007669"/>
    <property type="project" value="UniProtKB-KW"/>
</dbReference>
<dbReference type="GO" id="GO:0103016">
    <property type="term" value="F:tRNA-uridine 2-sulfurtransferase activity"/>
    <property type="evidence" value="ECO:0007669"/>
    <property type="project" value="UniProtKB-EC"/>
</dbReference>
<dbReference type="GO" id="GO:0002143">
    <property type="term" value="P:tRNA wobble position uridine thiolation"/>
    <property type="evidence" value="ECO:0007669"/>
    <property type="project" value="TreeGrafter"/>
</dbReference>
<dbReference type="CDD" id="cd01998">
    <property type="entry name" value="MnmA_TRMU-like"/>
    <property type="match status" value="1"/>
</dbReference>
<dbReference type="FunFam" id="2.30.30.280:FF:000001">
    <property type="entry name" value="tRNA-specific 2-thiouridylase MnmA"/>
    <property type="match status" value="1"/>
</dbReference>
<dbReference type="FunFam" id="3.40.50.620:FF:000057">
    <property type="entry name" value="tRNA-specific 2-thiouridylase MnmA"/>
    <property type="match status" value="1"/>
</dbReference>
<dbReference type="Gene3D" id="2.30.30.280">
    <property type="entry name" value="Adenine nucleotide alpha hydrolases-like domains"/>
    <property type="match status" value="1"/>
</dbReference>
<dbReference type="Gene3D" id="3.40.50.620">
    <property type="entry name" value="HUPs"/>
    <property type="match status" value="1"/>
</dbReference>
<dbReference type="Gene3D" id="2.40.30.10">
    <property type="entry name" value="Translation factors"/>
    <property type="match status" value="1"/>
</dbReference>
<dbReference type="HAMAP" id="MF_00144">
    <property type="entry name" value="tRNA_thiouridyl_MnmA"/>
    <property type="match status" value="1"/>
</dbReference>
<dbReference type="InterPro" id="IPR004506">
    <property type="entry name" value="MnmA-like"/>
</dbReference>
<dbReference type="InterPro" id="IPR046885">
    <property type="entry name" value="MnmA-like_C"/>
</dbReference>
<dbReference type="InterPro" id="IPR046884">
    <property type="entry name" value="MnmA-like_central"/>
</dbReference>
<dbReference type="InterPro" id="IPR023382">
    <property type="entry name" value="MnmA-like_central_sf"/>
</dbReference>
<dbReference type="InterPro" id="IPR014729">
    <property type="entry name" value="Rossmann-like_a/b/a_fold"/>
</dbReference>
<dbReference type="NCBIfam" id="NF001138">
    <property type="entry name" value="PRK00143.1"/>
    <property type="match status" value="1"/>
</dbReference>
<dbReference type="NCBIfam" id="TIGR00420">
    <property type="entry name" value="trmU"/>
    <property type="match status" value="1"/>
</dbReference>
<dbReference type="PANTHER" id="PTHR11933:SF5">
    <property type="entry name" value="MITOCHONDRIAL TRNA-SPECIFIC 2-THIOURIDYLASE 1"/>
    <property type="match status" value="1"/>
</dbReference>
<dbReference type="PANTHER" id="PTHR11933">
    <property type="entry name" value="TRNA 5-METHYLAMINOMETHYL-2-THIOURIDYLATE -METHYLTRANSFERASE"/>
    <property type="match status" value="1"/>
</dbReference>
<dbReference type="Pfam" id="PF03054">
    <property type="entry name" value="tRNA_Me_trans"/>
    <property type="match status" value="1"/>
</dbReference>
<dbReference type="Pfam" id="PF20258">
    <property type="entry name" value="tRNA_Me_trans_C"/>
    <property type="match status" value="1"/>
</dbReference>
<dbReference type="Pfam" id="PF20259">
    <property type="entry name" value="tRNA_Me_trans_M"/>
    <property type="match status" value="1"/>
</dbReference>
<dbReference type="SUPFAM" id="SSF52402">
    <property type="entry name" value="Adenine nucleotide alpha hydrolases-like"/>
    <property type="match status" value="1"/>
</dbReference>
<name>MNMA_KOCRD</name>
<sequence length="383" mass="41378">MRVLAAMSGGVDSAVAAARAVDAGHEVTGVHLALSRTPGTLRTGARGCCTIEDSRDAWRAAEKLGIPYYVWDFSERFQADVVDDFVAEYAAGRTPNPCMRCNEKIKFAALLEKALALGFDAVCTGHYAKVVEGPDGHKELHRAADWAKDQSYVLGVLTAEQLEHAIFPLAETPSKAQVRAEAEERGLSVATKPDSHDICFIPDGDTRGWLADHMDLDPGRIVDTEGNELGEHRGAQAYTVGQRRGLHIGRPAPDGKPRFVLEIRPKTNEVVVGPEQLLAIDVMEGIRPSWAGLPPREVAALGADPKARSEEFEVTVQVRAHGDPAPARAWLTRSEGTPRLHVRLDTAQRGVAPGQTMVLYQGTRVLGQATIDAAFADRPHAAV</sequence>
<keyword id="KW-0067">ATP-binding</keyword>
<keyword id="KW-0963">Cytoplasm</keyword>
<keyword id="KW-1015">Disulfide bond</keyword>
<keyword id="KW-0547">Nucleotide-binding</keyword>
<keyword id="KW-1185">Reference proteome</keyword>
<keyword id="KW-0694">RNA-binding</keyword>
<keyword id="KW-0808">Transferase</keyword>
<keyword id="KW-0819">tRNA processing</keyword>
<keyword id="KW-0820">tRNA-binding</keyword>
<comment type="function">
    <text evidence="1">Catalyzes the 2-thiolation of uridine at the wobble position (U34) of tRNA, leading to the formation of s(2)U34.</text>
</comment>
<comment type="catalytic activity">
    <reaction evidence="1">
        <text>S-sulfanyl-L-cysteinyl-[protein] + uridine(34) in tRNA + AH2 + ATP = 2-thiouridine(34) in tRNA + L-cysteinyl-[protein] + A + AMP + diphosphate + H(+)</text>
        <dbReference type="Rhea" id="RHEA:47032"/>
        <dbReference type="Rhea" id="RHEA-COMP:10131"/>
        <dbReference type="Rhea" id="RHEA-COMP:11726"/>
        <dbReference type="Rhea" id="RHEA-COMP:11727"/>
        <dbReference type="Rhea" id="RHEA-COMP:11728"/>
        <dbReference type="ChEBI" id="CHEBI:13193"/>
        <dbReference type="ChEBI" id="CHEBI:15378"/>
        <dbReference type="ChEBI" id="CHEBI:17499"/>
        <dbReference type="ChEBI" id="CHEBI:29950"/>
        <dbReference type="ChEBI" id="CHEBI:30616"/>
        <dbReference type="ChEBI" id="CHEBI:33019"/>
        <dbReference type="ChEBI" id="CHEBI:61963"/>
        <dbReference type="ChEBI" id="CHEBI:65315"/>
        <dbReference type="ChEBI" id="CHEBI:87170"/>
        <dbReference type="ChEBI" id="CHEBI:456215"/>
        <dbReference type="EC" id="2.8.1.13"/>
    </reaction>
</comment>
<comment type="subcellular location">
    <subcellularLocation>
        <location evidence="1">Cytoplasm</location>
    </subcellularLocation>
</comment>
<comment type="similarity">
    <text evidence="1">Belongs to the MnmA/TRMU family.</text>
</comment>
<organism>
    <name type="scientific">Kocuria rhizophila (strain ATCC 9341 / DSM 348 / NBRC 103217 / DC2201)</name>
    <dbReference type="NCBI Taxonomy" id="378753"/>
    <lineage>
        <taxon>Bacteria</taxon>
        <taxon>Bacillati</taxon>
        <taxon>Actinomycetota</taxon>
        <taxon>Actinomycetes</taxon>
        <taxon>Micrococcales</taxon>
        <taxon>Micrococcaceae</taxon>
        <taxon>Kocuria</taxon>
    </lineage>
</organism>
<gene>
    <name evidence="1" type="primary">mnmA</name>
    <name type="ordered locus">KRH_08770</name>
</gene>
<proteinExistence type="inferred from homology"/>
<reference key="1">
    <citation type="journal article" date="2008" name="J. Bacteriol.">
        <title>Complete genome sequence of the soil actinomycete Kocuria rhizophila.</title>
        <authorList>
            <person name="Takarada H."/>
            <person name="Sekine M."/>
            <person name="Kosugi H."/>
            <person name="Matsuo Y."/>
            <person name="Fujisawa T."/>
            <person name="Omata S."/>
            <person name="Kishi E."/>
            <person name="Shimizu A."/>
            <person name="Tsukatani N."/>
            <person name="Tanikawa S."/>
            <person name="Fujita N."/>
            <person name="Harayama S."/>
        </authorList>
    </citation>
    <scope>NUCLEOTIDE SEQUENCE [LARGE SCALE GENOMIC DNA]</scope>
    <source>
        <strain>ATCC 9341 / DSM 348 / NBRC 103217 / DC2201</strain>
    </source>
</reference>
<accession>B2GL48</accession>
<protein>
    <recommendedName>
        <fullName evidence="1">tRNA-specific 2-thiouridylase MnmA</fullName>
        <ecNumber evidence="1">2.8.1.13</ecNumber>
    </recommendedName>
</protein>